<proteinExistence type="inferred from homology"/>
<gene>
    <name evidence="1" type="primary">rutD</name>
    <name type="ordered locus">BWG_0863</name>
</gene>
<reference key="1">
    <citation type="journal article" date="2009" name="J. Bacteriol.">
        <title>Genomic sequencing reveals regulatory mutations and recombinational events in the widely used MC4100 lineage of Escherichia coli K-12.</title>
        <authorList>
            <person name="Ferenci T."/>
            <person name="Zhou Z."/>
            <person name="Betteridge T."/>
            <person name="Ren Y."/>
            <person name="Liu Y."/>
            <person name="Feng L."/>
            <person name="Reeves P.R."/>
            <person name="Wang L."/>
        </authorList>
    </citation>
    <scope>NUCLEOTIDE SEQUENCE [LARGE SCALE GENOMIC DNA]</scope>
    <source>
        <strain>K12 / MC4100 / BW2952</strain>
    </source>
</reference>
<sequence length="266" mass="28898">MKLSLSPPPYADAPVVVLISGLGGSGSYWLPQLAVLEQEYQVVCYDQRGTGNNPDTLAEDYSIAQMAAELHQALVAAGIEHYAVVGHALGALVGMQLALDYPASVTVLISVNGWLRINAHTRRCFQVRERLLYSGGAQAWVEAQPLFLYPADWMAARAPRLEAEDALALAHFQGKNNLLRRLNALKRADFSHHADRIRCPVQIICASDDLLVPTACSSELHAALPDSQKMVMPYGGHACNVTDPETFNALLLNGLASLLHHREAAL</sequence>
<dbReference type="EC" id="3.5.1.-" evidence="1"/>
<dbReference type="EMBL" id="CP001396">
    <property type="protein sequence ID" value="ACR64461.1"/>
    <property type="molecule type" value="Genomic_DNA"/>
</dbReference>
<dbReference type="RefSeq" id="WP_000777653.1">
    <property type="nucleotide sequence ID" value="NC_012759.1"/>
</dbReference>
<dbReference type="SMR" id="C4ZQD7"/>
<dbReference type="ESTHER" id="ecoli-rutD">
    <property type="family name" value="RutD"/>
</dbReference>
<dbReference type="KEGG" id="ebw:BWG_0863"/>
<dbReference type="HOGENOM" id="CLU_020336_50_1_6"/>
<dbReference type="GO" id="GO:0016811">
    <property type="term" value="F:hydrolase activity, acting on carbon-nitrogen (but not peptide) bonds, in linear amides"/>
    <property type="evidence" value="ECO:0007669"/>
    <property type="project" value="InterPro"/>
</dbReference>
<dbReference type="GO" id="GO:0019740">
    <property type="term" value="P:nitrogen utilization"/>
    <property type="evidence" value="ECO:0007669"/>
    <property type="project" value="UniProtKB-UniRule"/>
</dbReference>
<dbReference type="GO" id="GO:0006212">
    <property type="term" value="P:uracil catabolic process"/>
    <property type="evidence" value="ECO:0007669"/>
    <property type="project" value="UniProtKB-UniRule"/>
</dbReference>
<dbReference type="FunFam" id="3.40.50.1820:FF:000052">
    <property type="entry name" value="Putative aminoacrylate hydrolase RutD"/>
    <property type="match status" value="1"/>
</dbReference>
<dbReference type="Gene3D" id="3.40.50.1820">
    <property type="entry name" value="alpha/beta hydrolase"/>
    <property type="match status" value="1"/>
</dbReference>
<dbReference type="HAMAP" id="MF_00832">
    <property type="entry name" value="RutD"/>
    <property type="match status" value="1"/>
</dbReference>
<dbReference type="InterPro" id="IPR000073">
    <property type="entry name" value="AB_hydrolase_1"/>
</dbReference>
<dbReference type="InterPro" id="IPR029058">
    <property type="entry name" value="AB_hydrolase_fold"/>
</dbReference>
<dbReference type="InterPro" id="IPR050266">
    <property type="entry name" value="AB_hydrolase_sf"/>
</dbReference>
<dbReference type="InterPro" id="IPR019913">
    <property type="entry name" value="Pyrimidine_utilisation_RutD"/>
</dbReference>
<dbReference type="NCBIfam" id="TIGR03611">
    <property type="entry name" value="RutD"/>
    <property type="match status" value="1"/>
</dbReference>
<dbReference type="PANTHER" id="PTHR43798">
    <property type="entry name" value="MONOACYLGLYCEROL LIPASE"/>
    <property type="match status" value="1"/>
</dbReference>
<dbReference type="Pfam" id="PF00561">
    <property type="entry name" value="Abhydrolase_1"/>
    <property type="match status" value="1"/>
</dbReference>
<dbReference type="PRINTS" id="PR00111">
    <property type="entry name" value="ABHYDROLASE"/>
</dbReference>
<dbReference type="SUPFAM" id="SSF53474">
    <property type="entry name" value="alpha/beta-Hydrolases"/>
    <property type="match status" value="1"/>
</dbReference>
<organism>
    <name type="scientific">Escherichia coli (strain K12 / MC4100 / BW2952)</name>
    <dbReference type="NCBI Taxonomy" id="595496"/>
    <lineage>
        <taxon>Bacteria</taxon>
        <taxon>Pseudomonadati</taxon>
        <taxon>Pseudomonadota</taxon>
        <taxon>Gammaproteobacteria</taxon>
        <taxon>Enterobacterales</taxon>
        <taxon>Enterobacteriaceae</taxon>
        <taxon>Escherichia</taxon>
    </lineage>
</organism>
<keyword id="KW-0378">Hydrolase</keyword>
<protein>
    <recommendedName>
        <fullName evidence="1">Putative carbamate hydrolase RutD</fullName>
        <ecNumber evidence="1">3.5.1.-</ecNumber>
    </recommendedName>
    <alternativeName>
        <fullName evidence="1">Aminohydrolase</fullName>
    </alternativeName>
</protein>
<name>RUTD_ECOBW</name>
<feature type="chain" id="PRO_0000402943" description="Putative carbamate hydrolase RutD">
    <location>
        <begin position="1"/>
        <end position="266"/>
    </location>
</feature>
<evidence type="ECO:0000255" key="1">
    <source>
        <dbReference type="HAMAP-Rule" id="MF_00832"/>
    </source>
</evidence>
<accession>C4ZQD7</accession>
<comment type="function">
    <text evidence="1">Involved in pyrimidine catabolism. May facilitate the hydrolysis of carbamate, a reaction that can also occur spontaneously.</text>
</comment>
<comment type="catalytic activity">
    <reaction evidence="1">
        <text>carbamate + 2 H(+) = NH4(+) + CO2</text>
        <dbReference type="Rhea" id="RHEA:15649"/>
        <dbReference type="ChEBI" id="CHEBI:13941"/>
        <dbReference type="ChEBI" id="CHEBI:15378"/>
        <dbReference type="ChEBI" id="CHEBI:16526"/>
        <dbReference type="ChEBI" id="CHEBI:28938"/>
    </reaction>
</comment>
<comment type="similarity">
    <text evidence="1">Belongs to the AB hydrolase superfamily. Hydrolase RutD family.</text>
</comment>